<proteinExistence type="inferred from homology"/>
<feature type="chain" id="PRO_0000214171" description="UPF0283 membrane protein BR1033/BS1330_I1029">
    <location>
        <begin position="1"/>
        <end position="357"/>
    </location>
</feature>
<feature type="transmembrane region" description="Helical" evidence="1">
    <location>
        <begin position="78"/>
        <end position="98"/>
    </location>
</feature>
<feature type="transmembrane region" description="Helical" evidence="1">
    <location>
        <begin position="109"/>
        <end position="129"/>
    </location>
</feature>
<feature type="region of interest" description="Disordered" evidence="2">
    <location>
        <begin position="1"/>
        <end position="36"/>
    </location>
</feature>
<feature type="compositionally biased region" description="Basic and acidic residues" evidence="2">
    <location>
        <begin position="27"/>
        <end position="36"/>
    </location>
</feature>
<reference key="1">
    <citation type="journal article" date="2002" name="Proc. Natl. Acad. Sci. U.S.A.">
        <title>The Brucella suis genome reveals fundamental similarities between animal and plant pathogens and symbionts.</title>
        <authorList>
            <person name="Paulsen I.T."/>
            <person name="Seshadri R."/>
            <person name="Nelson K.E."/>
            <person name="Eisen J.A."/>
            <person name="Heidelberg J.F."/>
            <person name="Read T.D."/>
            <person name="Dodson R.J."/>
            <person name="Umayam L.A."/>
            <person name="Brinkac L.M."/>
            <person name="Beanan M.J."/>
            <person name="Daugherty S.C."/>
            <person name="DeBoy R.T."/>
            <person name="Durkin A.S."/>
            <person name="Kolonay J.F."/>
            <person name="Madupu R."/>
            <person name="Nelson W.C."/>
            <person name="Ayodeji B."/>
            <person name="Kraul M."/>
            <person name="Shetty J."/>
            <person name="Malek J.A."/>
            <person name="Van Aken S.E."/>
            <person name="Riedmuller S."/>
            <person name="Tettelin H."/>
            <person name="Gill S.R."/>
            <person name="White O."/>
            <person name="Salzberg S.L."/>
            <person name="Hoover D.L."/>
            <person name="Lindler L.E."/>
            <person name="Halling S.M."/>
            <person name="Boyle S.M."/>
            <person name="Fraser C.M."/>
        </authorList>
    </citation>
    <scope>NUCLEOTIDE SEQUENCE [LARGE SCALE GENOMIC DNA]</scope>
    <source>
        <strain>1330</strain>
    </source>
</reference>
<reference key="2">
    <citation type="journal article" date="2011" name="J. Bacteriol.">
        <title>Revised genome sequence of Brucella suis 1330.</title>
        <authorList>
            <person name="Tae H."/>
            <person name="Shallom S."/>
            <person name="Settlage R."/>
            <person name="Preston D."/>
            <person name="Adams L.G."/>
            <person name="Garner H.R."/>
        </authorList>
    </citation>
    <scope>NUCLEOTIDE SEQUENCE [LARGE SCALE GENOMIC DNA]</scope>
    <source>
        <strain>1330</strain>
    </source>
</reference>
<accession>Q8G0Q5</accession>
<accession>G0K9V6</accession>
<keyword id="KW-0997">Cell inner membrane</keyword>
<keyword id="KW-1003">Cell membrane</keyword>
<keyword id="KW-0472">Membrane</keyword>
<keyword id="KW-0812">Transmembrane</keyword>
<keyword id="KW-1133">Transmembrane helix</keyword>
<organism>
    <name type="scientific">Brucella suis biovar 1 (strain 1330)</name>
    <dbReference type="NCBI Taxonomy" id="204722"/>
    <lineage>
        <taxon>Bacteria</taxon>
        <taxon>Pseudomonadati</taxon>
        <taxon>Pseudomonadota</taxon>
        <taxon>Alphaproteobacteria</taxon>
        <taxon>Hyphomicrobiales</taxon>
        <taxon>Brucellaceae</taxon>
        <taxon>Brucella/Ochrobactrum group</taxon>
        <taxon>Brucella</taxon>
    </lineage>
</organism>
<sequence>MSDKTPRKPTAFRLEQPARVSAASEQEEPRRPRAVKDLEQITPQADVFDLTDDEAAELEILDPAFEAPERKGWSLSRILFGALGILVSFAIGIWTEDLIRALFARADWLGWTALGVAMVALAAFAAIILRELVALRRLASVQHLRKDAADAAERDDMAAARKAVDALRTIAAGIPETAKGRQLLDSLTDDIIDGRDLIRLAETEILRPLDREARTLVLNASKRVSIVTAISPRALVDIGYVIFESARLIRRLSQLYGGRPGTFGFIKLARRVIAHLAVTGTIAMGDSVIQQLVGHGLASRLSAKLGEGVVNGLMTARIGIAAMDVVRPFPFNAEKRPGIGDFIGDLARLNSDRNARK</sequence>
<evidence type="ECO:0000255" key="1">
    <source>
        <dbReference type="HAMAP-Rule" id="MF_01085"/>
    </source>
</evidence>
<evidence type="ECO:0000256" key="2">
    <source>
        <dbReference type="SAM" id="MobiDB-lite"/>
    </source>
</evidence>
<protein>
    <recommendedName>
        <fullName evidence="1">UPF0283 membrane protein BR1033/BS1330_I1029</fullName>
    </recommendedName>
</protein>
<dbReference type="EMBL" id="AE014291">
    <property type="protein sequence ID" value="AAN29954.1"/>
    <property type="molecule type" value="Genomic_DNA"/>
</dbReference>
<dbReference type="EMBL" id="CP002997">
    <property type="protein sequence ID" value="AEM18372.1"/>
    <property type="molecule type" value="Genomic_DNA"/>
</dbReference>
<dbReference type="RefSeq" id="WP_004690835.1">
    <property type="nucleotide sequence ID" value="NZ_KN046804.1"/>
</dbReference>
<dbReference type="KEGG" id="bms:BR1033"/>
<dbReference type="KEGG" id="bsi:BS1330_I1029"/>
<dbReference type="PATRIC" id="fig|204722.21.peg.771"/>
<dbReference type="HOGENOM" id="CLU_057693_1_0_5"/>
<dbReference type="Proteomes" id="UP000007104">
    <property type="component" value="Chromosome I"/>
</dbReference>
<dbReference type="GO" id="GO:0005886">
    <property type="term" value="C:plasma membrane"/>
    <property type="evidence" value="ECO:0007669"/>
    <property type="project" value="UniProtKB-SubCell"/>
</dbReference>
<dbReference type="HAMAP" id="MF_01085">
    <property type="entry name" value="UPF0283"/>
    <property type="match status" value="1"/>
</dbReference>
<dbReference type="InterPro" id="IPR021147">
    <property type="entry name" value="DUF697"/>
</dbReference>
<dbReference type="InterPro" id="IPR006507">
    <property type="entry name" value="UPF0283"/>
</dbReference>
<dbReference type="NCBIfam" id="TIGR01620">
    <property type="entry name" value="hyp_HI0043"/>
    <property type="match status" value="1"/>
</dbReference>
<dbReference type="PANTHER" id="PTHR39342">
    <property type="entry name" value="UPF0283 MEMBRANE PROTEIN YCJF"/>
    <property type="match status" value="1"/>
</dbReference>
<dbReference type="PANTHER" id="PTHR39342:SF1">
    <property type="entry name" value="UPF0283 MEMBRANE PROTEIN YCJF"/>
    <property type="match status" value="1"/>
</dbReference>
<dbReference type="Pfam" id="PF05128">
    <property type="entry name" value="DUF697"/>
    <property type="match status" value="1"/>
</dbReference>
<comment type="subcellular location">
    <subcellularLocation>
        <location evidence="1">Cell inner membrane</location>
        <topology evidence="1">Multi-pass membrane protein</topology>
    </subcellularLocation>
</comment>
<comment type="similarity">
    <text evidence="1">Belongs to the UPF0283 family.</text>
</comment>
<gene>
    <name type="ordered locus">BR1033</name>
    <name type="ordered locus">BS1330_I1029</name>
</gene>
<name>Y1033_BRUSU</name>